<comment type="function">
    <text evidence="1">Catalyzes the degradation of hydrogen peroxide (H(2)O(2)) generated by peroxisomal oxidases to water and oxygen, thereby protecting cells from the toxic effects of hydrogen peroxide.</text>
</comment>
<comment type="catalytic activity">
    <reaction evidence="2">
        <text>2 H2O2 = O2 + 2 H2O</text>
        <dbReference type="Rhea" id="RHEA:20309"/>
        <dbReference type="ChEBI" id="CHEBI:15377"/>
        <dbReference type="ChEBI" id="CHEBI:15379"/>
        <dbReference type="ChEBI" id="CHEBI:16240"/>
        <dbReference type="EC" id="1.11.1.6"/>
    </reaction>
</comment>
<comment type="cofactor">
    <cofactor evidence="1">
        <name>heme</name>
        <dbReference type="ChEBI" id="CHEBI:30413"/>
    </cofactor>
</comment>
<comment type="cofactor">
    <cofactor evidence="1">
        <name>NADP(+)</name>
        <dbReference type="ChEBI" id="CHEBI:58349"/>
    </cofactor>
</comment>
<comment type="subunit">
    <text evidence="1">Homotetramer.</text>
</comment>
<comment type="subcellular location">
    <subcellularLocation>
        <location evidence="1">Peroxisome matrix</location>
    </subcellularLocation>
</comment>
<comment type="similarity">
    <text evidence="4">Belongs to the catalase family.</text>
</comment>
<proteinExistence type="evidence at transcript level"/>
<organism>
    <name type="scientific">Danio rerio</name>
    <name type="common">Zebrafish</name>
    <name type="synonym">Brachydanio rerio</name>
    <dbReference type="NCBI Taxonomy" id="7955"/>
    <lineage>
        <taxon>Eukaryota</taxon>
        <taxon>Metazoa</taxon>
        <taxon>Chordata</taxon>
        <taxon>Craniata</taxon>
        <taxon>Vertebrata</taxon>
        <taxon>Euteleostomi</taxon>
        <taxon>Actinopterygii</taxon>
        <taxon>Neopterygii</taxon>
        <taxon>Teleostei</taxon>
        <taxon>Ostariophysi</taxon>
        <taxon>Cypriniformes</taxon>
        <taxon>Danionidae</taxon>
        <taxon>Danioninae</taxon>
        <taxon>Danio</taxon>
    </lineage>
</organism>
<keyword id="KW-0349">Heme</keyword>
<keyword id="KW-0376">Hydrogen peroxide</keyword>
<keyword id="KW-0408">Iron</keyword>
<keyword id="KW-0479">Metal-binding</keyword>
<keyword id="KW-0521">NADP</keyword>
<keyword id="KW-0560">Oxidoreductase</keyword>
<keyword id="KW-0575">Peroxidase</keyword>
<keyword id="KW-0576">Peroxisome</keyword>
<keyword id="KW-1185">Reference proteome</keyword>
<evidence type="ECO:0000250" key="1">
    <source>
        <dbReference type="UniProtKB" id="P04040"/>
    </source>
</evidence>
<evidence type="ECO:0000255" key="2">
    <source>
        <dbReference type="PROSITE-ProRule" id="PRU10013"/>
    </source>
</evidence>
<evidence type="ECO:0000256" key="3">
    <source>
        <dbReference type="SAM" id="MobiDB-lite"/>
    </source>
</evidence>
<evidence type="ECO:0000305" key="4"/>
<sequence>MADDREKSTDQMKLWKEGRGSQRPDVLTTGAGVPIGDKLNAMTAGPRGPLLVQDVVFTDEMAHFDRERIPERVVHAKGAGAFGYFEVTHDITRYSKAKVFEHVGKTTPIVVRFSTVAGEAGSPDTVRDPRGFAVKFYTDEGNWDLTGNNTPTFFIRDTLLSPSFIHSQKRNPQTHLKDPDMVWDFWSLRPESLHQVSFLFSDRGIPDGYRHMNGYGSHTFKLVNAQGQPVYCKFHYKTNQGIKNIPVEEADRLAATDPDYSIRDLYNAIANGNFPSWTFYIQVMTFEQAENWKWNPFDLTKVWSHKEFPLIPVGRFVLNRNPVNYFAEVEQLAFDPSNMPPGIEPSPDKMLQGRLFSYPDTHRHRLGANYLQLPVNCPYRTRVANYQRDGPMCMHDNQGGAPNYYPNSFSAPDVQPRFLESKCKVSPDVARYNSADDDNVTQVRTFFTQVLNEAERERLCQNMAGHLKGAQLFIQKRMVQNLMAVHSDYGNRVQALLDKHNAEGKKNTVHVYSRGGASAVAAASKM</sequence>
<feature type="chain" id="PRO_0000084906" description="Catalase">
    <location>
        <begin position="1"/>
        <end position="526"/>
    </location>
</feature>
<feature type="region of interest" description="Disordered" evidence="3">
    <location>
        <begin position="1"/>
        <end position="29"/>
    </location>
</feature>
<feature type="compositionally biased region" description="Basic and acidic residues" evidence="3">
    <location>
        <begin position="1"/>
        <end position="22"/>
    </location>
</feature>
<feature type="active site" evidence="2">
    <location>
        <position position="75"/>
    </location>
</feature>
<feature type="active site" evidence="2">
    <location>
        <position position="148"/>
    </location>
</feature>
<feature type="binding site" evidence="1">
    <location>
        <position position="194"/>
    </location>
    <ligand>
        <name>NADP(+)</name>
        <dbReference type="ChEBI" id="CHEBI:58349"/>
    </ligand>
</feature>
<feature type="binding site" evidence="1">
    <location>
        <position position="201"/>
    </location>
    <ligand>
        <name>NADP(+)</name>
        <dbReference type="ChEBI" id="CHEBI:58349"/>
    </ligand>
</feature>
<feature type="binding site" evidence="1">
    <location>
        <position position="203"/>
    </location>
    <ligand>
        <name>NADP(+)</name>
        <dbReference type="ChEBI" id="CHEBI:58349"/>
    </ligand>
</feature>
<feature type="binding site" evidence="1">
    <location>
        <position position="213"/>
    </location>
    <ligand>
        <name>NADP(+)</name>
        <dbReference type="ChEBI" id="CHEBI:58349"/>
    </ligand>
</feature>
<feature type="binding site" evidence="1">
    <location>
        <position position="237"/>
    </location>
    <ligand>
        <name>NADP(+)</name>
        <dbReference type="ChEBI" id="CHEBI:58349"/>
    </ligand>
</feature>
<feature type="binding site" evidence="1">
    <location>
        <position position="303"/>
    </location>
    <ligand>
        <name>NADP(+)</name>
        <dbReference type="ChEBI" id="CHEBI:58349"/>
    </ligand>
</feature>
<feature type="binding site" evidence="1">
    <location>
        <position position="305"/>
    </location>
    <ligand>
        <name>NADP(+)</name>
        <dbReference type="ChEBI" id="CHEBI:58349"/>
    </ligand>
</feature>
<feature type="binding site" evidence="1">
    <location>
        <position position="306"/>
    </location>
    <ligand>
        <name>NADP(+)</name>
        <dbReference type="ChEBI" id="CHEBI:58349"/>
    </ligand>
</feature>
<feature type="binding site" description="axial binding residue" evidence="1">
    <location>
        <position position="358"/>
    </location>
    <ligand>
        <name>heme</name>
        <dbReference type="ChEBI" id="CHEBI:30413"/>
    </ligand>
    <ligandPart>
        <name>Fe</name>
        <dbReference type="ChEBI" id="CHEBI:18248"/>
    </ligandPart>
</feature>
<feature type="sequence conflict" description="In Ref. 2; AAF89686." evidence="4" ref="2">
    <original>V</original>
    <variation>A</variation>
    <location>
        <position position="110"/>
    </location>
</feature>
<feature type="sequence conflict" description="In Ref. 2; AAF89686." evidence="4" ref="2">
    <original>P</original>
    <variation>S</variation>
    <location>
        <position position="123"/>
    </location>
</feature>
<feature type="sequence conflict" description="In Ref. 2; AAF89686." evidence="4" ref="2">
    <original>T</original>
    <variation>I</variation>
    <location>
        <position position="152"/>
    </location>
</feature>
<feature type="sequence conflict" description="In Ref. 2; AAF89686." evidence="4" ref="2">
    <original>S</original>
    <variation>F</variation>
    <location>
        <position position="161"/>
    </location>
</feature>
<feature type="sequence conflict" description="In Ref. 2; AAF89686." evidence="4" ref="2">
    <original>MLQ</original>
    <variation>NAA</variation>
    <location>
        <begin position="350"/>
        <end position="352"/>
    </location>
</feature>
<feature type="sequence conflict" description="In Ref. 2; AAF89686." evidence="4" ref="2">
    <original>M</original>
    <variation>T</variation>
    <location>
        <position position="478"/>
    </location>
</feature>
<protein>
    <recommendedName>
        <fullName>Catalase</fullName>
        <ecNumber evidence="2">1.11.1.6</ecNumber>
    </recommendedName>
</protein>
<accession>Q9PT92</accession>
<accession>Q9I8V5</accession>
<dbReference type="EC" id="1.11.1.6" evidence="2"/>
<dbReference type="EMBL" id="AJ007505">
    <property type="protein sequence ID" value="CAB64949.1"/>
    <property type="molecule type" value="mRNA"/>
</dbReference>
<dbReference type="EMBL" id="AF170069">
    <property type="protein sequence ID" value="AAF89686.1"/>
    <property type="molecule type" value="mRNA"/>
</dbReference>
<dbReference type="SMR" id="Q9PT92"/>
<dbReference type="FunCoup" id="Q9PT92">
    <property type="interactions" value="1760"/>
</dbReference>
<dbReference type="STRING" id="7955.ENSDARP00000134519"/>
<dbReference type="PaxDb" id="7955-ENSDARP00000013402"/>
<dbReference type="AGR" id="ZFIN:ZDB-GENE-000210-20"/>
<dbReference type="ZFIN" id="ZDB-GENE-000210-20">
    <property type="gene designation" value="cat"/>
</dbReference>
<dbReference type="eggNOG" id="KOG0047">
    <property type="taxonomic scope" value="Eukaryota"/>
</dbReference>
<dbReference type="InParanoid" id="Q9PT92"/>
<dbReference type="PhylomeDB" id="Q9PT92"/>
<dbReference type="Reactome" id="R-DRE-3299685">
    <property type="pathway name" value="Detoxification of Reactive Oxygen Species"/>
</dbReference>
<dbReference type="Reactome" id="R-DRE-6798695">
    <property type="pathway name" value="Neutrophil degranulation"/>
</dbReference>
<dbReference type="PRO" id="PR:Q9PT92"/>
<dbReference type="Proteomes" id="UP000000437">
    <property type="component" value="Unplaced"/>
</dbReference>
<dbReference type="GO" id="GO:0005737">
    <property type="term" value="C:cytoplasm"/>
    <property type="evidence" value="ECO:0000318"/>
    <property type="project" value="GO_Central"/>
</dbReference>
<dbReference type="GO" id="GO:0005739">
    <property type="term" value="C:mitochondrion"/>
    <property type="evidence" value="ECO:0000318"/>
    <property type="project" value="GO_Central"/>
</dbReference>
<dbReference type="GO" id="GO:0005782">
    <property type="term" value="C:peroxisomal matrix"/>
    <property type="evidence" value="ECO:0007669"/>
    <property type="project" value="UniProtKB-SubCell"/>
</dbReference>
<dbReference type="GO" id="GO:0005777">
    <property type="term" value="C:peroxisome"/>
    <property type="evidence" value="ECO:0000318"/>
    <property type="project" value="GO_Central"/>
</dbReference>
<dbReference type="GO" id="GO:0004096">
    <property type="term" value="F:catalase activity"/>
    <property type="evidence" value="ECO:0000318"/>
    <property type="project" value="GO_Central"/>
</dbReference>
<dbReference type="GO" id="GO:0020037">
    <property type="term" value="F:heme binding"/>
    <property type="evidence" value="ECO:0000318"/>
    <property type="project" value="GO_Central"/>
</dbReference>
<dbReference type="GO" id="GO:0046872">
    <property type="term" value="F:metal ion binding"/>
    <property type="evidence" value="ECO:0007669"/>
    <property type="project" value="UniProtKB-KW"/>
</dbReference>
<dbReference type="GO" id="GO:0042744">
    <property type="term" value="P:hydrogen peroxide catabolic process"/>
    <property type="evidence" value="ECO:0000318"/>
    <property type="project" value="GO_Central"/>
</dbReference>
<dbReference type="GO" id="GO:0046688">
    <property type="term" value="P:response to copper ion"/>
    <property type="evidence" value="ECO:0000314"/>
    <property type="project" value="ZFIN"/>
</dbReference>
<dbReference type="GO" id="GO:0042542">
    <property type="term" value="P:response to hydrogen peroxide"/>
    <property type="evidence" value="ECO:0000318"/>
    <property type="project" value="GO_Central"/>
</dbReference>
<dbReference type="CDD" id="cd08156">
    <property type="entry name" value="catalase_clade_3"/>
    <property type="match status" value="1"/>
</dbReference>
<dbReference type="FunFam" id="2.40.180.10:FF:000001">
    <property type="entry name" value="Catalase"/>
    <property type="match status" value="1"/>
</dbReference>
<dbReference type="Gene3D" id="2.40.180.10">
    <property type="entry name" value="Catalase core domain"/>
    <property type="match status" value="1"/>
</dbReference>
<dbReference type="InterPro" id="IPR018028">
    <property type="entry name" value="Catalase"/>
</dbReference>
<dbReference type="InterPro" id="IPR040333">
    <property type="entry name" value="Catalase_3"/>
</dbReference>
<dbReference type="InterPro" id="IPR024708">
    <property type="entry name" value="Catalase_AS"/>
</dbReference>
<dbReference type="InterPro" id="IPR024711">
    <property type="entry name" value="Catalase_clade1/3"/>
</dbReference>
<dbReference type="InterPro" id="IPR011614">
    <property type="entry name" value="Catalase_core"/>
</dbReference>
<dbReference type="InterPro" id="IPR002226">
    <property type="entry name" value="Catalase_haem_BS"/>
</dbReference>
<dbReference type="InterPro" id="IPR010582">
    <property type="entry name" value="Catalase_immune_responsive"/>
</dbReference>
<dbReference type="InterPro" id="IPR020835">
    <property type="entry name" value="Catalase_sf"/>
</dbReference>
<dbReference type="PANTHER" id="PTHR11465">
    <property type="entry name" value="CATALASE"/>
    <property type="match status" value="1"/>
</dbReference>
<dbReference type="PANTHER" id="PTHR11465:SF9">
    <property type="entry name" value="CATALASE"/>
    <property type="match status" value="1"/>
</dbReference>
<dbReference type="Pfam" id="PF00199">
    <property type="entry name" value="Catalase"/>
    <property type="match status" value="1"/>
</dbReference>
<dbReference type="Pfam" id="PF06628">
    <property type="entry name" value="Catalase-rel"/>
    <property type="match status" value="1"/>
</dbReference>
<dbReference type="PIRSF" id="PIRSF038928">
    <property type="entry name" value="Catalase_clade1-3"/>
    <property type="match status" value="1"/>
</dbReference>
<dbReference type="PRINTS" id="PR00067">
    <property type="entry name" value="CATALASE"/>
</dbReference>
<dbReference type="SMART" id="SM01060">
    <property type="entry name" value="Catalase"/>
    <property type="match status" value="1"/>
</dbReference>
<dbReference type="SUPFAM" id="SSF56634">
    <property type="entry name" value="Heme-dependent catalase-like"/>
    <property type="match status" value="1"/>
</dbReference>
<dbReference type="PROSITE" id="PS00437">
    <property type="entry name" value="CATALASE_1"/>
    <property type="match status" value="1"/>
</dbReference>
<dbReference type="PROSITE" id="PS00438">
    <property type="entry name" value="CATALASE_2"/>
    <property type="match status" value="1"/>
</dbReference>
<dbReference type="PROSITE" id="PS51402">
    <property type="entry name" value="CATALASE_3"/>
    <property type="match status" value="1"/>
</dbReference>
<reference key="1">
    <citation type="journal article" date="2000" name="J. Agric. Food Chem.">
        <title>Cloning and expression of a cDNA coding for catalase from zebrafish (Danio rerio).</title>
        <authorList>
            <person name="Ken C.F."/>
            <person name="Lin C.T."/>
            <person name="Wu J.L."/>
            <person name="Shaw J.F."/>
        </authorList>
    </citation>
    <scope>NUCLEOTIDE SEQUENCE [MRNA]</scope>
</reference>
<reference key="2">
    <citation type="journal article" date="2000" name="Comp. Biochem. Physiol.">
        <title>Molecular cloning and sequence analysis of the Danio rerio catalase gene.</title>
        <authorList>
            <person name="Gerhard G.S."/>
            <person name="Kauffman E.J."/>
            <person name="Grundy M.A."/>
        </authorList>
    </citation>
    <scope>NUCLEOTIDE SEQUENCE [MRNA]</scope>
</reference>
<name>CATA_DANRE</name>
<gene>
    <name type="primary">cat</name>
</gene>